<gene>
    <name type="ordered locus">SPT_0523</name>
</gene>
<name>Y523_STRZT</name>
<organism>
    <name type="scientific">Streptococcus pneumoniae (strain Taiwan19F-14)</name>
    <dbReference type="NCBI Taxonomy" id="487213"/>
    <lineage>
        <taxon>Bacteria</taxon>
        <taxon>Bacillati</taxon>
        <taxon>Bacillota</taxon>
        <taxon>Bacilli</taxon>
        <taxon>Lactobacillales</taxon>
        <taxon>Streptococcaceae</taxon>
        <taxon>Streptococcus</taxon>
    </lineage>
</organism>
<dbReference type="EMBL" id="CP000921">
    <property type="protein sequence ID" value="ACO24056.1"/>
    <property type="molecule type" value="Genomic_DNA"/>
</dbReference>
<dbReference type="RefSeq" id="WP_000403169.1">
    <property type="nucleotide sequence ID" value="NC_012469.1"/>
</dbReference>
<dbReference type="KEGG" id="snt:SPT_0523"/>
<dbReference type="HOGENOM" id="CLU_120023_0_0_9"/>
<dbReference type="GO" id="GO:0005886">
    <property type="term" value="C:plasma membrane"/>
    <property type="evidence" value="ECO:0007669"/>
    <property type="project" value="UniProtKB-SubCell"/>
</dbReference>
<dbReference type="Gene3D" id="1.10.1760.20">
    <property type="match status" value="1"/>
</dbReference>
<dbReference type="HAMAP" id="MF_01572">
    <property type="entry name" value="UPF0397"/>
    <property type="match status" value="1"/>
</dbReference>
<dbReference type="InterPro" id="IPR009825">
    <property type="entry name" value="ECF_substrate-spec-like"/>
</dbReference>
<dbReference type="InterPro" id="IPR022914">
    <property type="entry name" value="UPF0397"/>
</dbReference>
<dbReference type="NCBIfam" id="NF010182">
    <property type="entry name" value="PRK13661.1"/>
    <property type="match status" value="1"/>
</dbReference>
<dbReference type="PANTHER" id="PTHR37815">
    <property type="entry name" value="UPF0397 PROTEIN BC_2624-RELATED"/>
    <property type="match status" value="1"/>
</dbReference>
<dbReference type="PANTHER" id="PTHR37815:SF3">
    <property type="entry name" value="UPF0397 PROTEIN SPR0429"/>
    <property type="match status" value="1"/>
</dbReference>
<dbReference type="Pfam" id="PF07155">
    <property type="entry name" value="ECF-ribofla_trS"/>
    <property type="match status" value="1"/>
</dbReference>
<protein>
    <recommendedName>
        <fullName evidence="1">UPF0397 protein SPT_0523</fullName>
    </recommendedName>
</protein>
<accession>C1CPZ1</accession>
<comment type="subcellular location">
    <subcellularLocation>
        <location evidence="1">Cell membrane</location>
        <topology evidence="1">Multi-pass membrane protein</topology>
    </subcellularLocation>
</comment>
<comment type="similarity">
    <text evidence="1">Belongs to the UPF0397 family.</text>
</comment>
<sequence>MEIKFTIKQVVAVGIGAALFVVIGMINIPTPVPNTSIQLQYAVQALLSIIFGPIIGLLVGLIGHAIKDSLVGYGLWWTWIIASGLFGLVVGLFRKYVRVINGVFDWKDILIFNLIQLLANALVWGVLAPLGDVVIYQEAAEKVFAQGIVAGIANGVSVAIAGTLLLLAYAGTQTRAGSLKKD</sequence>
<feature type="chain" id="PRO_1000185574" description="UPF0397 protein SPT_0523">
    <location>
        <begin position="1"/>
        <end position="182"/>
    </location>
</feature>
<feature type="transmembrane region" description="Helical" evidence="1">
    <location>
        <begin position="10"/>
        <end position="30"/>
    </location>
</feature>
<feature type="transmembrane region" description="Helical" evidence="1">
    <location>
        <begin position="46"/>
        <end position="66"/>
    </location>
</feature>
<feature type="transmembrane region" description="Helical" evidence="1">
    <location>
        <begin position="73"/>
        <end position="93"/>
    </location>
</feature>
<feature type="transmembrane region" description="Helical" evidence="1">
    <location>
        <begin position="109"/>
        <end position="129"/>
    </location>
</feature>
<feature type="transmembrane region" description="Helical" evidence="1">
    <location>
        <begin position="148"/>
        <end position="168"/>
    </location>
</feature>
<keyword id="KW-1003">Cell membrane</keyword>
<keyword id="KW-0472">Membrane</keyword>
<keyword id="KW-0812">Transmembrane</keyword>
<keyword id="KW-1133">Transmembrane helix</keyword>
<evidence type="ECO:0000255" key="1">
    <source>
        <dbReference type="HAMAP-Rule" id="MF_01572"/>
    </source>
</evidence>
<proteinExistence type="inferred from homology"/>
<reference key="1">
    <citation type="journal article" date="2010" name="Genome Biol.">
        <title>Structure and dynamics of the pan-genome of Streptococcus pneumoniae and closely related species.</title>
        <authorList>
            <person name="Donati C."/>
            <person name="Hiller N.L."/>
            <person name="Tettelin H."/>
            <person name="Muzzi A."/>
            <person name="Croucher N.J."/>
            <person name="Angiuoli S.V."/>
            <person name="Oggioni M."/>
            <person name="Dunning Hotopp J.C."/>
            <person name="Hu F.Z."/>
            <person name="Riley D.R."/>
            <person name="Covacci A."/>
            <person name="Mitchell T.J."/>
            <person name="Bentley S.D."/>
            <person name="Kilian M."/>
            <person name="Ehrlich G.D."/>
            <person name="Rappuoli R."/>
            <person name="Moxon E.R."/>
            <person name="Masignani V."/>
        </authorList>
    </citation>
    <scope>NUCLEOTIDE SEQUENCE [LARGE SCALE GENOMIC DNA]</scope>
    <source>
        <strain>Taiwan19F-14</strain>
    </source>
</reference>